<feature type="chain" id="PRO_0000385028" description="Putative apoptosis inhibitor ORF106">
    <location>
        <begin position="1"/>
        <end position="465"/>
    </location>
</feature>
<feature type="repeat" description="BIR">
    <location>
        <begin position="291"/>
        <end position="357"/>
    </location>
</feature>
<feature type="zinc finger region" description="RING-type" evidence="1">
    <location>
        <begin position="405"/>
        <end position="447"/>
    </location>
</feature>
<feature type="region of interest" description="Disordered" evidence="2">
    <location>
        <begin position="373"/>
        <end position="393"/>
    </location>
</feature>
<feature type="compositionally biased region" description="Acidic residues" evidence="2">
    <location>
        <begin position="373"/>
        <end position="382"/>
    </location>
</feature>
<dbReference type="EMBL" id="AY509253">
    <property type="protein sequence ID" value="AAS00991.1"/>
    <property type="molecule type" value="Genomic_DNA"/>
</dbReference>
<dbReference type="RefSeq" id="YP_024644.1">
    <property type="nucleotide sequence ID" value="NC_005881.2"/>
</dbReference>
<dbReference type="KEGG" id="vg:2948175"/>
<dbReference type="Proteomes" id="UP000007021">
    <property type="component" value="Segment"/>
</dbReference>
<dbReference type="GO" id="GO:0008270">
    <property type="term" value="F:zinc ion binding"/>
    <property type="evidence" value="ECO:0007669"/>
    <property type="project" value="UniProtKB-KW"/>
</dbReference>
<dbReference type="GO" id="GO:0051726">
    <property type="term" value="P:regulation of cell cycle"/>
    <property type="evidence" value="ECO:0007669"/>
    <property type="project" value="TreeGrafter"/>
</dbReference>
<dbReference type="CDD" id="cd00022">
    <property type="entry name" value="BIR"/>
    <property type="match status" value="1"/>
</dbReference>
<dbReference type="Gene3D" id="1.10.1170.10">
    <property type="entry name" value="Inhibitor Of Apoptosis Protein (2mihbC-IAP-1), Chain A"/>
    <property type="match status" value="1"/>
</dbReference>
<dbReference type="Gene3D" id="3.30.40.10">
    <property type="entry name" value="Zinc/RING finger domain, C3HC4 (zinc finger)"/>
    <property type="match status" value="1"/>
</dbReference>
<dbReference type="InterPro" id="IPR001370">
    <property type="entry name" value="BIR_rpt"/>
</dbReference>
<dbReference type="InterPro" id="IPR050784">
    <property type="entry name" value="IAP"/>
</dbReference>
<dbReference type="InterPro" id="IPR001841">
    <property type="entry name" value="Znf_RING"/>
</dbReference>
<dbReference type="InterPro" id="IPR013083">
    <property type="entry name" value="Znf_RING/FYVE/PHD"/>
</dbReference>
<dbReference type="PANTHER" id="PTHR10044:SF139">
    <property type="entry name" value="DEATH-ASSOCIATED INHIBITOR OF APOPTOSIS 2"/>
    <property type="match status" value="1"/>
</dbReference>
<dbReference type="PANTHER" id="PTHR10044">
    <property type="entry name" value="INHIBITOR OF APOPTOSIS"/>
    <property type="match status" value="1"/>
</dbReference>
<dbReference type="Pfam" id="PF00653">
    <property type="entry name" value="BIR"/>
    <property type="match status" value="1"/>
</dbReference>
<dbReference type="Pfam" id="PF13920">
    <property type="entry name" value="zf-C3HC4_3"/>
    <property type="match status" value="1"/>
</dbReference>
<dbReference type="SMART" id="SM00238">
    <property type="entry name" value="BIR"/>
    <property type="match status" value="1"/>
</dbReference>
<dbReference type="SUPFAM" id="SSF57924">
    <property type="entry name" value="Inhibitor of apoptosis (IAP) repeat"/>
    <property type="match status" value="1"/>
</dbReference>
<dbReference type="PROSITE" id="PS50143">
    <property type="entry name" value="BIR_REPEAT_2"/>
    <property type="match status" value="1"/>
</dbReference>
<dbReference type="PROSITE" id="PS50089">
    <property type="entry name" value="ZF_RING_2"/>
    <property type="match status" value="1"/>
</dbReference>
<proteinExistence type="predicted"/>
<sequence>MSRPIEWSPENGAAVCLVEEYNYPMAIRCYKCNVLFDITGLPYTVDAFIEKHDSITSGMEGNQCRIKDLGDDWKKGLFSNFFFKTELSDTEEKITCTNCVWSRNVLKNSYYTRGMIKYAHDNESPACIIKNTEEMKTSDSWQYGNSCDVNFMQMETPFKKFTNKSVICSSCMTIIAGRDEHPTFGGFVNSHFINNPHCKDMDFLKNLSIDSRRIVVIANLDDFPDYNSDTSSSEGESSVGDEITYYNADEFTEMFGDDSDDDSDDEGIEDLSAYDEAMSVNDVDYKDVKERECSFSTWPKQMKQDSKEMAEAGWYYTGKSDRVRCFHCGITFGGWMPDDDPWSIHKLMEKETCGWLEFNPDKIPKVLRYIDDEGGEDKEEDGGGGGVIEFPKNNKEVENPKRGSCKACYERKADIAFIPCGHVFSCNICTMEMFASYKKKKRCPMCRVHVEKVQKIFLDEDEDMA</sequence>
<accession>Q6R7C4</accession>
<name>IAP4_OSHVF</name>
<organismHost>
    <name type="scientific">Magallana gigas</name>
    <name type="common">Pacific oyster</name>
    <name type="synonym">Crassostrea gigas</name>
    <dbReference type="NCBI Taxonomy" id="29159"/>
</organismHost>
<organismHost>
    <name type="scientific">Pecten maximus</name>
    <name type="common">King scallop</name>
    <name type="synonym">Pilgrim's clam</name>
    <dbReference type="NCBI Taxonomy" id="6579"/>
</organismHost>
<organism>
    <name type="scientific">Ostreid herpesvirus 1 (isolate France)</name>
    <name type="common">OsHV-1</name>
    <name type="synonym">Pacific oyster herpesvirus</name>
    <dbReference type="NCBI Taxonomy" id="654903"/>
    <lineage>
        <taxon>Viruses</taxon>
        <taxon>Duplodnaviria</taxon>
        <taxon>Heunggongvirae</taxon>
        <taxon>Peploviricota</taxon>
        <taxon>Herviviricetes</taxon>
        <taxon>Herpesvirales</taxon>
        <taxon>Malacoherpesviridae</taxon>
        <taxon>Ostreavirus</taxon>
        <taxon>Ostreavirus ostreidmalaco1</taxon>
        <taxon>Ostreid herpesvirus 1</taxon>
    </lineage>
</organism>
<gene>
    <name type="ORF">ORF106</name>
</gene>
<keyword id="KW-0479">Metal-binding</keyword>
<keyword id="KW-1185">Reference proteome</keyword>
<keyword id="KW-0862">Zinc</keyword>
<keyword id="KW-0863">Zinc-finger</keyword>
<protein>
    <recommendedName>
        <fullName>Putative apoptosis inhibitor ORF106</fullName>
    </recommendedName>
</protein>
<evidence type="ECO:0000255" key="1">
    <source>
        <dbReference type="PROSITE-ProRule" id="PRU00175"/>
    </source>
</evidence>
<evidence type="ECO:0000256" key="2">
    <source>
        <dbReference type="SAM" id="MobiDB-lite"/>
    </source>
</evidence>
<reference key="1">
    <citation type="journal article" date="2005" name="J. Gen. Virol.">
        <title>A novel class of herpesvirus with bivalve hosts.</title>
        <authorList>
            <person name="Davison A.J."/>
            <person name="Trus B.L."/>
            <person name="Cheng N."/>
            <person name="Steven A.C."/>
            <person name="Watson M.S."/>
            <person name="Cunningham C."/>
            <person name="Le Deuff R.M."/>
            <person name="Renault T."/>
        </authorList>
    </citation>
    <scope>NUCLEOTIDE SEQUENCE [LARGE SCALE GENOMIC DNA]</scope>
</reference>